<accession>Q1Q986</accession>
<dbReference type="EMBL" id="CP000323">
    <property type="protein sequence ID" value="ABE75767.1"/>
    <property type="molecule type" value="Genomic_DNA"/>
</dbReference>
<dbReference type="RefSeq" id="WP_010201403.1">
    <property type="nucleotide sequence ID" value="NC_007969.1"/>
</dbReference>
<dbReference type="SMR" id="Q1Q986"/>
<dbReference type="STRING" id="335284.Pcryo_1990"/>
<dbReference type="KEGG" id="pcr:Pcryo_1990"/>
<dbReference type="eggNOG" id="COG0267">
    <property type="taxonomic scope" value="Bacteria"/>
</dbReference>
<dbReference type="HOGENOM" id="CLU_190949_1_1_6"/>
<dbReference type="Proteomes" id="UP000002425">
    <property type="component" value="Chromosome"/>
</dbReference>
<dbReference type="GO" id="GO:0022625">
    <property type="term" value="C:cytosolic large ribosomal subunit"/>
    <property type="evidence" value="ECO:0007669"/>
    <property type="project" value="TreeGrafter"/>
</dbReference>
<dbReference type="GO" id="GO:0003735">
    <property type="term" value="F:structural constituent of ribosome"/>
    <property type="evidence" value="ECO:0007669"/>
    <property type="project" value="InterPro"/>
</dbReference>
<dbReference type="GO" id="GO:0006412">
    <property type="term" value="P:translation"/>
    <property type="evidence" value="ECO:0007669"/>
    <property type="project" value="UniProtKB-UniRule"/>
</dbReference>
<dbReference type="FunFam" id="2.20.28.120:FF:000001">
    <property type="entry name" value="50S ribosomal protein L33"/>
    <property type="match status" value="1"/>
</dbReference>
<dbReference type="Gene3D" id="2.20.28.120">
    <property type="entry name" value="Ribosomal protein L33"/>
    <property type="match status" value="1"/>
</dbReference>
<dbReference type="HAMAP" id="MF_00294">
    <property type="entry name" value="Ribosomal_bL33"/>
    <property type="match status" value="1"/>
</dbReference>
<dbReference type="InterPro" id="IPR001705">
    <property type="entry name" value="Ribosomal_bL33"/>
</dbReference>
<dbReference type="InterPro" id="IPR018264">
    <property type="entry name" value="Ribosomal_bL33_CS"/>
</dbReference>
<dbReference type="InterPro" id="IPR038584">
    <property type="entry name" value="Ribosomal_bL33_sf"/>
</dbReference>
<dbReference type="InterPro" id="IPR011332">
    <property type="entry name" value="Ribosomal_zn-bd"/>
</dbReference>
<dbReference type="NCBIfam" id="NF001860">
    <property type="entry name" value="PRK00595.1"/>
    <property type="match status" value="1"/>
</dbReference>
<dbReference type="NCBIfam" id="TIGR01023">
    <property type="entry name" value="rpmG_bact"/>
    <property type="match status" value="1"/>
</dbReference>
<dbReference type="PANTHER" id="PTHR15238">
    <property type="entry name" value="54S RIBOSOMAL PROTEIN L39, MITOCHONDRIAL"/>
    <property type="match status" value="1"/>
</dbReference>
<dbReference type="PANTHER" id="PTHR15238:SF1">
    <property type="entry name" value="LARGE RIBOSOMAL SUBUNIT PROTEIN BL33M"/>
    <property type="match status" value="1"/>
</dbReference>
<dbReference type="Pfam" id="PF00471">
    <property type="entry name" value="Ribosomal_L33"/>
    <property type="match status" value="1"/>
</dbReference>
<dbReference type="SUPFAM" id="SSF57829">
    <property type="entry name" value="Zn-binding ribosomal proteins"/>
    <property type="match status" value="1"/>
</dbReference>
<dbReference type="PROSITE" id="PS00582">
    <property type="entry name" value="RIBOSOMAL_L33"/>
    <property type="match status" value="1"/>
</dbReference>
<organism>
    <name type="scientific">Psychrobacter cryohalolentis (strain ATCC BAA-1226 / DSM 17306 / VKM B-2378 / K5)</name>
    <dbReference type="NCBI Taxonomy" id="335284"/>
    <lineage>
        <taxon>Bacteria</taxon>
        <taxon>Pseudomonadati</taxon>
        <taxon>Pseudomonadota</taxon>
        <taxon>Gammaproteobacteria</taxon>
        <taxon>Moraxellales</taxon>
        <taxon>Moraxellaceae</taxon>
        <taxon>Psychrobacter</taxon>
    </lineage>
</organism>
<sequence length="51" mass="6006">MRDKIKLVSTAGTGYYYTTTKNKRTMPGKMEIKKFDPKVRQHVIFKEAKIK</sequence>
<gene>
    <name evidence="1" type="primary">rpmG</name>
    <name type="ordered locus">Pcryo_1990</name>
</gene>
<keyword id="KW-0687">Ribonucleoprotein</keyword>
<keyword id="KW-0689">Ribosomal protein</keyword>
<evidence type="ECO:0000255" key="1">
    <source>
        <dbReference type="HAMAP-Rule" id="MF_00294"/>
    </source>
</evidence>
<evidence type="ECO:0000305" key="2"/>
<comment type="similarity">
    <text evidence="1">Belongs to the bacterial ribosomal protein bL33 family.</text>
</comment>
<feature type="chain" id="PRO_0000356620" description="Large ribosomal subunit protein bL33">
    <location>
        <begin position="1"/>
        <end position="51"/>
    </location>
</feature>
<protein>
    <recommendedName>
        <fullName evidence="1">Large ribosomal subunit protein bL33</fullName>
    </recommendedName>
    <alternativeName>
        <fullName evidence="2">50S ribosomal protein L33</fullName>
    </alternativeName>
</protein>
<proteinExistence type="inferred from homology"/>
<name>RL33_PSYCK</name>
<reference key="1">
    <citation type="submission" date="2006-03" db="EMBL/GenBank/DDBJ databases">
        <title>Complete sequence of chromosome of Psychrobacter cryohalolentis K5.</title>
        <authorList>
            <consortium name="US DOE Joint Genome Institute"/>
            <person name="Copeland A."/>
            <person name="Lucas S."/>
            <person name="Lapidus A."/>
            <person name="Barry K."/>
            <person name="Detter J.C."/>
            <person name="Glavina T."/>
            <person name="Hammon N."/>
            <person name="Israni S."/>
            <person name="Dalin E."/>
            <person name="Tice H."/>
            <person name="Pitluck S."/>
            <person name="Brettin T."/>
            <person name="Bruce D."/>
            <person name="Han C."/>
            <person name="Tapia R."/>
            <person name="Sims D.R."/>
            <person name="Gilna P."/>
            <person name="Schmutz J."/>
            <person name="Larimer F."/>
            <person name="Land M."/>
            <person name="Hauser L."/>
            <person name="Kyrpides N."/>
            <person name="Kim E."/>
            <person name="Richardson P."/>
        </authorList>
    </citation>
    <scope>NUCLEOTIDE SEQUENCE [LARGE SCALE GENOMIC DNA]</scope>
    <source>
        <strain>ATCC BAA-1226 / DSM 17306 / VKM B-2378 / K5</strain>
    </source>
</reference>